<sequence>MSRKKTRVTGVDALAEAFDAVNHADLLERLGVDIDRDLLVLALTHRSFANENGMLPNNERLEFLGDAVLGLAVANRLYELYPSSPESDISKMRASIVSRYGLADIAREINLGEFILLGKGELLTEGRSKDSILADTTEALLGAIFRQHGYEVARDVVLTLFHHKINHASAKGIHQDWKTTLQEELAQRKKPMVEYQTTSVGPDHDLLFTAVVYLGDVEMGRGEGPNKKLAEQEAARQAFLKLREKRA</sequence>
<proteinExistence type="inferred from homology"/>
<gene>
    <name evidence="1" type="primary">rnc</name>
    <name type="ordered locus">CE1976</name>
</gene>
<reference key="1">
    <citation type="journal article" date="2003" name="Genome Res.">
        <title>Comparative complete genome sequence analysis of the amino acid replacements responsible for the thermostability of Corynebacterium efficiens.</title>
        <authorList>
            <person name="Nishio Y."/>
            <person name="Nakamura Y."/>
            <person name="Kawarabayasi Y."/>
            <person name="Usuda Y."/>
            <person name="Kimura E."/>
            <person name="Sugimoto S."/>
            <person name="Matsui K."/>
            <person name="Yamagishi A."/>
            <person name="Kikuchi H."/>
            <person name="Ikeo K."/>
            <person name="Gojobori T."/>
        </authorList>
    </citation>
    <scope>NUCLEOTIDE SEQUENCE [LARGE SCALE GENOMIC DNA]</scope>
    <source>
        <strain>DSM 44549 / YS-314 / AJ 12310 / JCM 11189 / NBRC 100395</strain>
    </source>
</reference>
<accession>Q8FP16</accession>
<evidence type="ECO:0000255" key="1">
    <source>
        <dbReference type="HAMAP-Rule" id="MF_00104"/>
    </source>
</evidence>
<evidence type="ECO:0000305" key="2"/>
<protein>
    <recommendedName>
        <fullName evidence="1">Ribonuclease 3</fullName>
        <ecNumber evidence="1">3.1.26.3</ecNumber>
    </recommendedName>
    <alternativeName>
        <fullName evidence="1">Ribonuclease III</fullName>
        <shortName evidence="1">RNase III</shortName>
    </alternativeName>
</protein>
<name>RNC_COREF</name>
<comment type="function">
    <text evidence="1">Digests double-stranded RNA. Involved in the processing of primary rRNA transcript to yield the immediate precursors to the large and small rRNAs (23S and 16S). Processes some mRNAs, and tRNAs when they are encoded in the rRNA operon. Processes pre-crRNA and tracrRNA of type II CRISPR loci if present in the organism.</text>
</comment>
<comment type="catalytic activity">
    <reaction evidence="1">
        <text>Endonucleolytic cleavage to 5'-phosphomonoester.</text>
        <dbReference type="EC" id="3.1.26.3"/>
    </reaction>
</comment>
<comment type="cofactor">
    <cofactor evidence="1">
        <name>Mg(2+)</name>
        <dbReference type="ChEBI" id="CHEBI:18420"/>
    </cofactor>
</comment>
<comment type="subunit">
    <text evidence="1">Homodimer.</text>
</comment>
<comment type="subcellular location">
    <subcellularLocation>
        <location evidence="1">Cytoplasm</location>
    </subcellularLocation>
</comment>
<comment type="similarity">
    <text evidence="1">Belongs to the ribonuclease III family.</text>
</comment>
<comment type="sequence caution" evidence="2">
    <conflict type="erroneous initiation">
        <sequence resource="EMBL-CDS" id="BAC18786"/>
    </conflict>
    <text>Extended N-terminus.</text>
</comment>
<keyword id="KW-0963">Cytoplasm</keyword>
<keyword id="KW-0255">Endonuclease</keyword>
<keyword id="KW-0378">Hydrolase</keyword>
<keyword id="KW-0460">Magnesium</keyword>
<keyword id="KW-0479">Metal-binding</keyword>
<keyword id="KW-0507">mRNA processing</keyword>
<keyword id="KW-0540">Nuclease</keyword>
<keyword id="KW-1185">Reference proteome</keyword>
<keyword id="KW-0694">RNA-binding</keyword>
<keyword id="KW-0698">rRNA processing</keyword>
<keyword id="KW-0699">rRNA-binding</keyword>
<keyword id="KW-0819">tRNA processing</keyword>
<dbReference type="EC" id="3.1.26.3" evidence="1"/>
<dbReference type="EMBL" id="BA000035">
    <property type="protein sequence ID" value="BAC18786.1"/>
    <property type="status" value="ALT_INIT"/>
    <property type="molecule type" value="Genomic_DNA"/>
</dbReference>
<dbReference type="RefSeq" id="WP_006767973.1">
    <property type="nucleotide sequence ID" value="NC_004369.1"/>
</dbReference>
<dbReference type="SMR" id="Q8FP16"/>
<dbReference type="STRING" id="196164.gene:10742404"/>
<dbReference type="KEGG" id="cef:CE1976"/>
<dbReference type="eggNOG" id="COG0571">
    <property type="taxonomic scope" value="Bacteria"/>
</dbReference>
<dbReference type="HOGENOM" id="CLU_000907_1_2_11"/>
<dbReference type="OrthoDB" id="9805026at2"/>
<dbReference type="Proteomes" id="UP000001409">
    <property type="component" value="Chromosome"/>
</dbReference>
<dbReference type="GO" id="GO:0005737">
    <property type="term" value="C:cytoplasm"/>
    <property type="evidence" value="ECO:0007669"/>
    <property type="project" value="UniProtKB-SubCell"/>
</dbReference>
<dbReference type="GO" id="GO:0003725">
    <property type="term" value="F:double-stranded RNA binding"/>
    <property type="evidence" value="ECO:0007669"/>
    <property type="project" value="TreeGrafter"/>
</dbReference>
<dbReference type="GO" id="GO:0046872">
    <property type="term" value="F:metal ion binding"/>
    <property type="evidence" value="ECO:0007669"/>
    <property type="project" value="UniProtKB-KW"/>
</dbReference>
<dbReference type="GO" id="GO:0004525">
    <property type="term" value="F:ribonuclease III activity"/>
    <property type="evidence" value="ECO:0007669"/>
    <property type="project" value="UniProtKB-UniRule"/>
</dbReference>
<dbReference type="GO" id="GO:0019843">
    <property type="term" value="F:rRNA binding"/>
    <property type="evidence" value="ECO:0007669"/>
    <property type="project" value="UniProtKB-KW"/>
</dbReference>
<dbReference type="GO" id="GO:0006397">
    <property type="term" value="P:mRNA processing"/>
    <property type="evidence" value="ECO:0007669"/>
    <property type="project" value="UniProtKB-UniRule"/>
</dbReference>
<dbReference type="GO" id="GO:0010468">
    <property type="term" value="P:regulation of gene expression"/>
    <property type="evidence" value="ECO:0007669"/>
    <property type="project" value="TreeGrafter"/>
</dbReference>
<dbReference type="GO" id="GO:0006364">
    <property type="term" value="P:rRNA processing"/>
    <property type="evidence" value="ECO:0007669"/>
    <property type="project" value="UniProtKB-UniRule"/>
</dbReference>
<dbReference type="GO" id="GO:0008033">
    <property type="term" value="P:tRNA processing"/>
    <property type="evidence" value="ECO:0007669"/>
    <property type="project" value="UniProtKB-KW"/>
</dbReference>
<dbReference type="CDD" id="cd10845">
    <property type="entry name" value="DSRM_RNAse_III_family"/>
    <property type="match status" value="1"/>
</dbReference>
<dbReference type="CDD" id="cd00593">
    <property type="entry name" value="RIBOc"/>
    <property type="match status" value="1"/>
</dbReference>
<dbReference type="FunFam" id="1.10.1520.10:FF:000001">
    <property type="entry name" value="Ribonuclease 3"/>
    <property type="match status" value="1"/>
</dbReference>
<dbReference type="Gene3D" id="3.30.160.20">
    <property type="match status" value="1"/>
</dbReference>
<dbReference type="Gene3D" id="1.10.1520.10">
    <property type="entry name" value="Ribonuclease III domain"/>
    <property type="match status" value="1"/>
</dbReference>
<dbReference type="HAMAP" id="MF_00104">
    <property type="entry name" value="RNase_III"/>
    <property type="match status" value="1"/>
</dbReference>
<dbReference type="InterPro" id="IPR014720">
    <property type="entry name" value="dsRBD_dom"/>
</dbReference>
<dbReference type="InterPro" id="IPR011907">
    <property type="entry name" value="RNase_III"/>
</dbReference>
<dbReference type="InterPro" id="IPR000999">
    <property type="entry name" value="RNase_III_dom"/>
</dbReference>
<dbReference type="InterPro" id="IPR036389">
    <property type="entry name" value="RNase_III_sf"/>
</dbReference>
<dbReference type="NCBIfam" id="TIGR02191">
    <property type="entry name" value="RNaseIII"/>
    <property type="match status" value="1"/>
</dbReference>
<dbReference type="PANTHER" id="PTHR11207:SF0">
    <property type="entry name" value="RIBONUCLEASE 3"/>
    <property type="match status" value="1"/>
</dbReference>
<dbReference type="PANTHER" id="PTHR11207">
    <property type="entry name" value="RIBONUCLEASE III"/>
    <property type="match status" value="1"/>
</dbReference>
<dbReference type="Pfam" id="PF00035">
    <property type="entry name" value="dsrm"/>
    <property type="match status" value="1"/>
</dbReference>
<dbReference type="Pfam" id="PF14622">
    <property type="entry name" value="Ribonucleas_3_3"/>
    <property type="match status" value="1"/>
</dbReference>
<dbReference type="SMART" id="SM00358">
    <property type="entry name" value="DSRM"/>
    <property type="match status" value="1"/>
</dbReference>
<dbReference type="SMART" id="SM00535">
    <property type="entry name" value="RIBOc"/>
    <property type="match status" value="1"/>
</dbReference>
<dbReference type="SUPFAM" id="SSF54768">
    <property type="entry name" value="dsRNA-binding domain-like"/>
    <property type="match status" value="1"/>
</dbReference>
<dbReference type="SUPFAM" id="SSF69065">
    <property type="entry name" value="RNase III domain-like"/>
    <property type="match status" value="1"/>
</dbReference>
<dbReference type="PROSITE" id="PS50137">
    <property type="entry name" value="DS_RBD"/>
    <property type="match status" value="1"/>
</dbReference>
<dbReference type="PROSITE" id="PS00517">
    <property type="entry name" value="RNASE_3_1"/>
    <property type="match status" value="1"/>
</dbReference>
<dbReference type="PROSITE" id="PS50142">
    <property type="entry name" value="RNASE_3_2"/>
    <property type="match status" value="1"/>
</dbReference>
<feature type="chain" id="PRO_0000228519" description="Ribonuclease 3">
    <location>
        <begin position="1"/>
        <end position="247"/>
    </location>
</feature>
<feature type="domain" description="RNase III" evidence="1">
    <location>
        <begin position="23"/>
        <end position="149"/>
    </location>
</feature>
<feature type="domain" description="DRBM" evidence="1">
    <location>
        <begin position="176"/>
        <end position="244"/>
    </location>
</feature>
<feature type="active site" evidence="1">
    <location>
        <position position="66"/>
    </location>
</feature>
<feature type="active site" evidence="1">
    <location>
        <position position="138"/>
    </location>
</feature>
<feature type="binding site" evidence="1">
    <location>
        <position position="62"/>
    </location>
    <ligand>
        <name>Mg(2+)</name>
        <dbReference type="ChEBI" id="CHEBI:18420"/>
    </ligand>
</feature>
<feature type="binding site" evidence="1">
    <location>
        <position position="135"/>
    </location>
    <ligand>
        <name>Mg(2+)</name>
        <dbReference type="ChEBI" id="CHEBI:18420"/>
    </ligand>
</feature>
<feature type="binding site" evidence="1">
    <location>
        <position position="138"/>
    </location>
    <ligand>
        <name>Mg(2+)</name>
        <dbReference type="ChEBI" id="CHEBI:18420"/>
    </ligand>
</feature>
<organism>
    <name type="scientific">Corynebacterium efficiens (strain DSM 44549 / YS-314 / AJ 12310 / JCM 11189 / NBRC 100395)</name>
    <dbReference type="NCBI Taxonomy" id="196164"/>
    <lineage>
        <taxon>Bacteria</taxon>
        <taxon>Bacillati</taxon>
        <taxon>Actinomycetota</taxon>
        <taxon>Actinomycetes</taxon>
        <taxon>Mycobacteriales</taxon>
        <taxon>Corynebacteriaceae</taxon>
        <taxon>Corynebacterium</taxon>
    </lineage>
</organism>